<organism>
    <name type="scientific">Neisseria gonorrhoeae</name>
    <dbReference type="NCBI Taxonomy" id="485"/>
    <lineage>
        <taxon>Bacteria</taxon>
        <taxon>Pseudomonadati</taxon>
        <taxon>Pseudomonadota</taxon>
        <taxon>Betaproteobacteria</taxon>
        <taxon>Neisseriales</taxon>
        <taxon>Neisseriaceae</taxon>
        <taxon>Neisseria</taxon>
    </lineage>
</organism>
<reference key="1">
    <citation type="journal article" date="1985" name="J. Bacteriol.">
        <title>Cryptic plasmid of Neisseria gonorrhoeae: complete nucleotide sequence and genetic organization.</title>
        <authorList>
            <person name="Korch C."/>
            <person name="Hagblom P."/>
            <person name="Oehman H."/>
            <person name="Goeransson M."/>
            <person name="Normark S."/>
        </authorList>
    </citation>
    <scope>NUCLEOTIDE SEQUENCE [GENOMIC DNA]</scope>
</reference>
<dbReference type="EMBL" id="M10316">
    <property type="protein sequence ID" value="AAA88205.1"/>
    <property type="molecule type" value="Genomic_DNA"/>
</dbReference>
<dbReference type="RefSeq" id="NP_040416.1">
    <property type="nucleotide sequence ID" value="NC_001377.1"/>
</dbReference>
<dbReference type="RefSeq" id="WP_003690227.1">
    <property type="nucleotide sequence ID" value="NZ_WHPK01000008.1"/>
</dbReference>
<dbReference type="SMR" id="P07048"/>
<proteinExistence type="predicted"/>
<geneLocation type="plasmid">
    <name>pJD1</name>
</geneLocation>
<protein>
    <recommendedName>
        <fullName>Cryptic plasmid protein A</fullName>
    </recommendedName>
</protein>
<comment type="miscellaneous">
    <text>Plasmid pJD1 is the smallest of the gonococcal plasmids. Its function is unknown.</text>
</comment>
<feature type="chain" id="PRO_0000079291" description="Cryptic plasmid protein A">
    <location>
        <begin position="1"/>
        <end position="84"/>
    </location>
</feature>
<name>CPPA_NEIGO</name>
<keyword id="KW-0614">Plasmid</keyword>
<gene>
    <name type="primary">cppA</name>
</gene>
<accession>P07048</accession>
<sequence>MITENERDRRTAAWLIETYGAEAVAEAETRIAGARKPYPSNIAKVLGASLPEALKRTENAAARQKLAGLRRMLDGKAVKTSQDL</sequence>